<organism>
    <name type="scientific">Monkeypox virus</name>
    <dbReference type="NCBI Taxonomy" id="10244"/>
    <lineage>
        <taxon>Viruses</taxon>
        <taxon>Varidnaviria</taxon>
        <taxon>Bamfordvirae</taxon>
        <taxon>Nucleocytoviricota</taxon>
        <taxon>Pokkesviricetes</taxon>
        <taxon>Chitovirales</taxon>
        <taxon>Poxviridae</taxon>
        <taxon>Chordopoxvirinae</taxon>
        <taxon>Orthopoxvirus</taxon>
    </lineage>
</organism>
<dbReference type="EMBL" id="MT903340">
    <property type="protein sequence ID" value="QNP13026.1"/>
    <property type="molecule type" value="Genomic_DNA"/>
</dbReference>
<dbReference type="RefSeq" id="NP_536583.1">
    <property type="nucleotide sequence ID" value="NC_003310.1"/>
</dbReference>
<dbReference type="RefSeq" id="YP_010377153.1">
    <property type="nucleotide sequence ID" value="NC_063383.1"/>
</dbReference>
<dbReference type="SMR" id="A0A7H0DNE3"/>
<dbReference type="GeneID" id="72551567"/>
<dbReference type="GeneID" id="928932"/>
<dbReference type="KEGG" id="vg:928932"/>
<dbReference type="Proteomes" id="UP000516359">
    <property type="component" value="Genome"/>
</dbReference>
<dbReference type="GO" id="GO:0030430">
    <property type="term" value="C:host cell cytoplasm"/>
    <property type="evidence" value="ECO:0007669"/>
    <property type="project" value="UniProtKB-SubCell"/>
</dbReference>
<dbReference type="GO" id="GO:0044423">
    <property type="term" value="C:virion component"/>
    <property type="evidence" value="ECO:0007669"/>
    <property type="project" value="UniProtKB-KW"/>
</dbReference>
<dbReference type="GO" id="GO:0005507">
    <property type="term" value="F:copper ion binding"/>
    <property type="evidence" value="ECO:0007669"/>
    <property type="project" value="InterPro"/>
</dbReference>
<dbReference type="GO" id="GO:0006801">
    <property type="term" value="P:superoxide metabolic process"/>
    <property type="evidence" value="ECO:0007669"/>
    <property type="project" value="InterPro"/>
</dbReference>
<dbReference type="Gene3D" id="2.60.40.200">
    <property type="entry name" value="Superoxide dismutase, copper/zinc binding domain"/>
    <property type="match status" value="1"/>
</dbReference>
<dbReference type="InterPro" id="IPR036423">
    <property type="entry name" value="SOD-like_Cu/Zn_dom_sf"/>
</dbReference>
<dbReference type="InterPro" id="IPR024134">
    <property type="entry name" value="SOD_Cu/Zn_/chaperone"/>
</dbReference>
<dbReference type="PANTHER" id="PTHR10003">
    <property type="entry name" value="SUPEROXIDE DISMUTASE CU-ZN -RELATED"/>
    <property type="match status" value="1"/>
</dbReference>
<dbReference type="SUPFAM" id="SSF49329">
    <property type="entry name" value="Cu,Zn superoxide dismutase-like"/>
    <property type="match status" value="1"/>
</dbReference>
<organismHost>
    <name type="scientific">Cynomys gunnisoni</name>
    <name type="common">Gunnison's prairie dog</name>
    <name type="synonym">Spermophilus gunnisoni</name>
    <dbReference type="NCBI Taxonomy" id="45479"/>
</organismHost>
<organismHost>
    <name type="scientific">Cynomys leucurus</name>
    <name type="common">White-tailed prairie dog</name>
    <dbReference type="NCBI Taxonomy" id="99825"/>
</organismHost>
<organismHost>
    <name type="scientific">Cynomys ludovicianus</name>
    <name type="common">Black-tailed prairie dog</name>
    <dbReference type="NCBI Taxonomy" id="45480"/>
</organismHost>
<organismHost>
    <name type="scientific">Cynomys mexicanus</name>
    <name type="common">Mexican prairie dog</name>
    <dbReference type="NCBI Taxonomy" id="99826"/>
</organismHost>
<organismHost>
    <name type="scientific">Cynomys parvidens</name>
    <name type="common">Utah prairie dog</name>
    <dbReference type="NCBI Taxonomy" id="99827"/>
</organismHost>
<organismHost>
    <name type="scientific">Gliridae</name>
    <name type="common">dormice</name>
    <dbReference type="NCBI Taxonomy" id="30650"/>
</organismHost>
<organismHost>
    <name type="scientific">Heliosciurus ruwenzorii</name>
    <name type="common">Ruwenzori sun squirrel</name>
    <dbReference type="NCBI Taxonomy" id="226685"/>
</organismHost>
<organismHost>
    <name type="scientific">Homo sapiens</name>
    <name type="common">Human</name>
    <dbReference type="NCBI Taxonomy" id="9606"/>
</organismHost>
<organismHost>
    <name type="scientific">Mus musculus</name>
    <name type="common">Mouse</name>
    <dbReference type="NCBI Taxonomy" id="10090"/>
</organismHost>
<name>SODL_MONPV</name>
<comment type="function">
    <text evidence="1">Superoxide dismutase-like protein with no enzymatic activity.</text>
</comment>
<comment type="subcellular location">
    <subcellularLocation>
        <location evidence="1">Virion</location>
    </subcellularLocation>
    <subcellularLocation>
        <location evidence="1">Host cytoplasm</location>
    </subcellularLocation>
    <text evidence="1">Accumulates predominantly in cytoplasmic viral factories.</text>
</comment>
<comment type="similarity">
    <text evidence="2">Belongs to the Cu-Zn superoxide dismutase family.</text>
</comment>
<proteinExistence type="inferred from homology"/>
<protein>
    <recommendedName>
        <fullName>Cu-Zn superoxide dismutase-like protein OPG175</fullName>
    </recommendedName>
</protein>
<accession>A0A7H0DNE3</accession>
<reference key="1">
    <citation type="journal article" date="2022" name="J. Infect. Dis.">
        <title>Exportation of Monkeypox virus from the African continent.</title>
        <authorList>
            <person name="Mauldin M.R."/>
            <person name="McCollum A.M."/>
            <person name="Nakazawa Y.J."/>
            <person name="Mandra A."/>
            <person name="Whitehouse E.R."/>
            <person name="Davidson W."/>
            <person name="Zhao H."/>
            <person name="Gao J."/>
            <person name="Li Y."/>
            <person name="Doty J."/>
            <person name="Yinka-Ogunleye A."/>
            <person name="Akinpelu A."/>
            <person name="Aruna O."/>
            <person name="Naidoo D."/>
            <person name="Lewandowski K."/>
            <person name="Afrough B."/>
            <person name="Graham V."/>
            <person name="Aarons E."/>
            <person name="Hewson R."/>
            <person name="Vipond R."/>
            <person name="Dunning J."/>
            <person name="Chand M."/>
            <person name="Brown C."/>
            <person name="Cohen-Gihon I."/>
            <person name="Erez N."/>
            <person name="Shifman O."/>
            <person name="Israeli O."/>
            <person name="Sharon M."/>
            <person name="Schwartz E."/>
            <person name="Beth-Din A."/>
            <person name="Zvi A."/>
            <person name="Mak T.M."/>
            <person name="Ng Y.K."/>
            <person name="Cui L."/>
            <person name="Lin R.T.P."/>
            <person name="Olson V.A."/>
            <person name="Brooks T."/>
            <person name="Paran N."/>
            <person name="Ihekweazu C."/>
            <person name="Reynolds M.G."/>
        </authorList>
    </citation>
    <scope>NUCLEOTIDE SEQUENCE [LARGE SCALE GENOMIC DNA]</scope>
    <source>
        <strain>MPXV-M5312_HM12_Rivers</strain>
    </source>
</reference>
<sequence>MAVCIIDHDNIRGVIYVEQVHGKDKVLGSVIGLKSGTYSLIIHRYGDISRGCDSIGSPEIFIGNIFVNRYGVAYVYLDTDVNISTIIGKALSISKNDQRLACGVIGISYINEKIIHFLTINENGV</sequence>
<gene>
    <name type="primary">OPG175</name>
    <name type="ORF">MPXVgp156</name>
</gene>
<feature type="chain" id="PRO_0000457607" description="Cu-Zn superoxide dismutase-like protein OPG175">
    <location>
        <begin position="1"/>
        <end position="125"/>
    </location>
</feature>
<feature type="disulfide bond" evidence="1">
    <location>
        <begin position="52"/>
        <end position="102"/>
    </location>
</feature>
<keyword id="KW-1015">Disulfide bond</keyword>
<keyword id="KW-1035">Host cytoplasm</keyword>
<keyword id="KW-1185">Reference proteome</keyword>
<keyword id="KW-0946">Virion</keyword>
<evidence type="ECO:0000250" key="1">
    <source>
        <dbReference type="UniProtKB" id="P26669"/>
    </source>
</evidence>
<evidence type="ECO:0000305" key="2"/>